<proteinExistence type="evidence at protein level"/>
<name>KAX62_SCOPA</name>
<keyword id="KW-0002">3D-structure</keyword>
<keyword id="KW-0027">Amidation</keyword>
<keyword id="KW-1221">Calcium-activated potassium channel impairing toxin</keyword>
<keyword id="KW-0903">Direct protein sequencing</keyword>
<keyword id="KW-1015">Disulfide bond</keyword>
<keyword id="KW-0872">Ion channel impairing toxin</keyword>
<keyword id="KW-0528">Neurotoxin</keyword>
<keyword id="KW-0632">Potassium channel impairing toxin</keyword>
<keyword id="KW-0964">Secreted</keyword>
<keyword id="KW-0800">Toxin</keyword>
<keyword id="KW-1220">Voltage-gated potassium channel impairing toxin</keyword>
<organism>
    <name type="scientific">Scorpio palmatus</name>
    <name type="common">Israeli golden scorpion</name>
    <name type="synonym">Scorpio maurus palmatus</name>
    <dbReference type="NCBI Taxonomy" id="1662106"/>
    <lineage>
        <taxon>Eukaryota</taxon>
        <taxon>Metazoa</taxon>
        <taxon>Ecdysozoa</taxon>
        <taxon>Arthropoda</taxon>
        <taxon>Chelicerata</taxon>
        <taxon>Arachnida</taxon>
        <taxon>Scorpiones</taxon>
        <taxon>Iurida</taxon>
        <taxon>Scorpionoidea</taxon>
        <taxon>Scorpionidae</taxon>
        <taxon>Scorpioninae</taxon>
        <taxon>Scorpio</taxon>
    </lineage>
</organism>
<protein>
    <recommendedName>
        <fullName>Potassium channel toxin alpha-KTx 6.2</fullName>
    </recommendedName>
    <alternativeName>
        <fullName evidence="13">Maurotoxin</fullName>
        <shortName evidence="13">MTX</shortName>
    </alternativeName>
</protein>
<accession>P80719</accession>
<reference key="1">
    <citation type="journal article" date="1996" name="Eur. J. Biochem.">
        <title>Chemical synthesis and characterization of maurotoxin, a short scorpion toxin with four disulfide bridges that acts on K+ channels.</title>
        <authorList>
            <person name="Kharrat R."/>
            <person name="Mabrouk K."/>
            <person name="Crest M."/>
            <person name="Darbon H."/>
            <person name="Oughideni R."/>
            <person name="Martin-Eauclaire M.-F."/>
            <person name="Jacquet G."/>
            <person name="el Ayeb M."/>
            <person name="van Rietschoten J."/>
            <person name="Rochat H."/>
            <person name="Sabatier J.-M."/>
        </authorList>
    </citation>
    <scope>PROTEIN SEQUENCE</scope>
    <scope>FUNCTION</scope>
    <scope>SYNTHESIS</scope>
    <scope>DISULFIDE BONDS</scope>
    <scope>TOXIC DOSE</scope>
    <scope>SUBUNIT</scope>
</reference>
<reference key="2">
    <citation type="journal article" date="1997" name="FEBS Lett.">
        <title>Maurotoxin, a four disulfide bridge toxin from Scorpio maurus venom: purification, structure and action on potassium channels.</title>
        <authorList>
            <person name="Kharrat R."/>
            <person name="Mansuelle P."/>
            <person name="Sampieri F."/>
            <person name="Crest M."/>
            <person name="Oughideni R."/>
            <person name="Van Rietschoten J."/>
            <person name="Martin-Eauclaire M.-F."/>
            <person name="Rochat H."/>
            <person name="El Ayeb M."/>
        </authorList>
    </citation>
    <scope>PROTEIN SEQUENCE</scope>
    <scope>FUNCTION</scope>
    <scope>SYNTHESIS</scope>
    <scope>DISULFIDE BONDS</scope>
    <scope>TOXIC DOSE</scope>
    <source>
        <tissue>Venom</tissue>
    </source>
</reference>
<reference key="3">
    <citation type="journal article" date="1998" name="Toxicon">
        <title>Maurotoxin, a four disulfide bridges scorpion toxin acting on K+ channels.</title>
        <authorList>
            <person name="Rochat H."/>
            <person name="Kharrat R."/>
            <person name="Sabatier J.-M."/>
            <person name="Mansuelle P."/>
            <person name="Crest M."/>
            <person name="Martin-Eauclaire M.-F."/>
            <person name="Sampieri F."/>
            <person name="Oughideni R."/>
            <person name="Mabrouk K."/>
            <person name="Jacquet G."/>
            <person name="Van Rietschoten J."/>
            <person name="El Ayeb M."/>
        </authorList>
    </citation>
    <scope>SYNTHESIS</scope>
    <scope>AMIDATION AT CYS-34</scope>
    <scope>DISULFIDE BONDS</scope>
</reference>
<reference key="4">
    <citation type="journal article" date="2000" name="Biophys. J.">
        <title>Mechanisms of maurotoxin action on Shaker potassium channels.</title>
        <authorList>
            <person name="Avdonin V."/>
            <person name="Nolan B."/>
            <person name="Sabatier J.-M."/>
            <person name="De Waard M."/>
            <person name="Hoshi T."/>
        </authorList>
    </citation>
    <scope>FUNCTION</scope>
</reference>
<reference key="5">
    <citation type="journal article" date="2000" name="J. Biol. Chem.">
        <title>Maurotoxin versus Pi1/HsTx1 scorpion toxins. Toward new insights in the understanding of their distinct disulfide bridge patterns.</title>
        <authorList>
            <person name="Fajloun Z."/>
            <person name="Mosbah A."/>
            <person name="Carlier E."/>
            <person name="Mansuelle P."/>
            <person name="Sandoz G."/>
            <person name="Fathallah M."/>
            <person name="di Luccio E."/>
            <person name="Devaux C."/>
            <person name="Rochat H."/>
            <person name="Darbon H."/>
            <person name="De Waard M."/>
            <person name="Sabatier J.-M."/>
        </authorList>
    </citation>
    <scope>DISULFIDE BONDS</scope>
    <scope>MUTAGENESIS OF LYS-15 AND GLY-33</scope>
</reference>
<reference key="6">
    <citation type="journal article" date="2000" name="J. Pept. Res.">
        <title>Effect of maurotoxin, a four disulfide-bridged toxin from the chactoid scorpion Scorpio maurus, on Shaker K+ channels.</title>
        <authorList>
            <person name="Carlier E."/>
            <person name="Avdonin V."/>
            <person name="Geib S."/>
            <person name="Fajloun Z."/>
            <person name="Kharrat R."/>
            <person name="Rochat H."/>
            <person name="Sabatier J.-M."/>
            <person name="Hoshi T."/>
            <person name="De Waard M."/>
        </authorList>
    </citation>
    <scope>FUNCTION</scope>
    <scope>MUTAGENESIS OF LYS-23</scope>
</reference>
<reference key="7">
    <citation type="journal article" date="2001" name="J. Biol. Chem.">
        <title>Design and characterization of a highly selective peptide inhibitor of the small conductance calcium-activated K+ channel, SkCa2.</title>
        <authorList>
            <person name="Shakkottai V.G."/>
            <person name="Regaya I."/>
            <person name="Wulff H."/>
            <person name="Fajloun Z."/>
            <person name="Tomita H."/>
            <person name="Fathallah M."/>
            <person name="Cahalan M.D."/>
            <person name="Gargus J.J."/>
            <person name="Sabatier J.M."/>
            <person name="Chandy K.G."/>
        </authorList>
    </citation>
    <scope>FUNCTION</scope>
</reference>
<reference key="8">
    <citation type="journal article" date="2003" name="Mol. Pharmacol.">
        <title>Maurotoxin: a potent inhibitor of intermediate conductance Ca2+-activated potassium channels.</title>
        <authorList>
            <person name="Castle N.A."/>
            <person name="London D.O."/>
            <person name="Creech C."/>
            <person name="Fajloun Z."/>
            <person name="Stocker J.W."/>
            <person name="Sabatier J.-M."/>
        </authorList>
    </citation>
    <scope>FUNCTION</scope>
</reference>
<reference key="9">
    <citation type="journal article" date="2004" name="J. Biol. Chem.">
        <title>Evidence for domain-specific recognition of SK and Kv channels by MTX and HsTx1 scorpion toxins.</title>
        <authorList>
            <person name="Regaya I."/>
            <person name="Beeton C."/>
            <person name="Ferrat G."/>
            <person name="Andreotti N."/>
            <person name="Darbon H."/>
            <person name="De Waard M."/>
            <person name="Sabatier J.M."/>
        </authorList>
    </citation>
    <scope>FUNCTION</scope>
    <scope>STRUCTURE BY NMR OF MAUROTOXIN-HSTX1 CHIMERA</scope>
</reference>
<reference key="10">
    <citation type="journal article" date="2008" name="Protein Sci.">
        <title>Chemical synthesis and 1H-NMR 3D structure determination of AgTx2-MTX chimera, a new potential blocker for Kv1.2 channel, derived from MTX and AgTx2 scorpion toxins.</title>
        <authorList>
            <person name="Pimentel C."/>
            <person name="M'Barek S."/>
            <person name="Visan V."/>
            <person name="Grissmer S."/>
            <person name="Sampieri F."/>
            <person name="Sabatier J.M."/>
            <person name="Darbon H."/>
            <person name="Fajloun Z."/>
        </authorList>
    </citation>
    <scope>FUNCTION</scope>
</reference>
<reference key="11">
    <citation type="journal article" date="1997" name="Proteins">
        <title>Solution structure of maurotoxin, a scorpion toxin from Scorpio maurus, with high affinity for voltage-gated potassium channels.</title>
        <authorList>
            <person name="Blanc E."/>
            <person name="Sabatier J.-M."/>
            <person name="Kharrat R."/>
            <person name="Meunier S."/>
            <person name="el Ayeb M."/>
            <person name="van Rietschoten J."/>
            <person name="Darbon H."/>
        </authorList>
    </citation>
    <scope>STRUCTURE BY NMR</scope>
    <scope>DISULFIDE BONDS</scope>
</reference>
<reference key="12">
    <citation type="journal article" date="1999" name="Protein Sci.">
        <title>Structural and functional consequences of the presence of a fourth disulfide bridge in the scorpion short toxins: solution structure of the potassium channel inhibitor HsTX1.</title>
        <authorList>
            <person name="Savarin P."/>
            <person name="Romi-Lebrun R."/>
            <person name="Zinn-Justin S."/>
            <person name="Lebrun B."/>
            <person name="Nakajima T."/>
            <person name="Gilquin B."/>
            <person name="Menez A."/>
        </authorList>
    </citation>
    <scope>STRUCTURE BY NMR</scope>
</reference>
<reference key="13">
    <citation type="journal article" date="2005" name="Proteins">
        <title>Increasing the molecular contacts between maurotoxin and Kv1.2 channel augments ligand affinity.</title>
        <authorList>
            <person name="M'Barek S."/>
            <person name="Chagot B."/>
            <person name="Andreotti N."/>
            <person name="Visan V."/>
            <person name="Mansuelle P."/>
            <person name="Grissmer S."/>
            <person name="Marrakchi M."/>
            <person name="El Ayeb M."/>
            <person name="Sampieri F."/>
            <person name="Darbon H."/>
            <person name="Fajloun Z."/>
            <person name="De Waard M."/>
            <person name="Sabatier J.-M."/>
        </authorList>
    </citation>
    <scope>STRUCTURE BY NMR OF MAUROTOXIN-BUTANTOXIN CHIMERA</scope>
</reference>
<dbReference type="PDB" id="1TXM">
    <property type="method" value="NMR"/>
    <property type="chains" value="A=1-34"/>
</dbReference>
<dbReference type="PDB" id="1WPD">
    <property type="method" value="NMR"/>
    <property type="chains" value="A=1-16"/>
</dbReference>
<dbReference type="PDB" id="1WT7">
    <property type="method" value="NMR"/>
    <property type="chains" value="A=3-34"/>
</dbReference>
<dbReference type="PDBsum" id="1TXM"/>
<dbReference type="PDBsum" id="1WPD"/>
<dbReference type="PDBsum" id="1WT7"/>
<dbReference type="BMRB" id="P80719"/>
<dbReference type="SMR" id="P80719"/>
<dbReference type="EvolutionaryTrace" id="P80719"/>
<dbReference type="GO" id="GO:0005576">
    <property type="term" value="C:extracellular region"/>
    <property type="evidence" value="ECO:0007669"/>
    <property type="project" value="UniProtKB-SubCell"/>
</dbReference>
<dbReference type="GO" id="GO:0008200">
    <property type="term" value="F:ion channel inhibitor activity"/>
    <property type="evidence" value="ECO:0007669"/>
    <property type="project" value="InterPro"/>
</dbReference>
<dbReference type="GO" id="GO:0015459">
    <property type="term" value="F:potassium channel regulator activity"/>
    <property type="evidence" value="ECO:0007669"/>
    <property type="project" value="UniProtKB-KW"/>
</dbReference>
<dbReference type="GO" id="GO:0090729">
    <property type="term" value="F:toxin activity"/>
    <property type="evidence" value="ECO:0007669"/>
    <property type="project" value="UniProtKB-KW"/>
</dbReference>
<dbReference type="Gene3D" id="3.30.30.10">
    <property type="entry name" value="Knottin, scorpion toxin-like"/>
    <property type="match status" value="1"/>
</dbReference>
<dbReference type="InterPro" id="IPR036574">
    <property type="entry name" value="Scorpion_toxin-like_sf"/>
</dbReference>
<dbReference type="InterPro" id="IPR001947">
    <property type="entry name" value="Scorpion_toxinS_K_inh"/>
</dbReference>
<dbReference type="Pfam" id="PF00451">
    <property type="entry name" value="Toxin_2"/>
    <property type="match status" value="1"/>
</dbReference>
<dbReference type="PRINTS" id="PR00286">
    <property type="entry name" value="CHARYBDTOXIN"/>
</dbReference>
<dbReference type="SUPFAM" id="SSF57095">
    <property type="entry name" value="Scorpion toxin-like"/>
    <property type="match status" value="1"/>
</dbReference>
<dbReference type="PROSITE" id="PS01138">
    <property type="entry name" value="SCORP_SHORT_TOXIN"/>
    <property type="match status" value="1"/>
</dbReference>
<comment type="function">
    <text evidence="2 3 6 7 8 9 10">Blocks voltage-gated potassium channels Kv1.2/KCNA2 (IC(50)=0.12-0.8 nM), KCa3.1/KCNN4 (IC(50)=1-2.2 nM), Shaker B (IC(50)=2.39-80 nM), Kv1.1/KCNA1 (IC(50)=37-45 or no activity, depending on the study), Kv1.3/KCNA3 (IC(50)=150-180 or no activity, depending on the study).</text>
</comment>
<comment type="subcellular location">
    <subcellularLocation>
        <location evidence="9">Secreted</location>
    </subcellularLocation>
</comment>
<comment type="tissue specificity">
    <text evidence="16">Expressed by the venom gland.</text>
</comment>
<comment type="domain">
    <text evidence="11">Has the structural arrangement of an alpha-helix connected to a beta-sheet by disulfide bonds (CSalpha/beta).</text>
</comment>
<comment type="toxic dose">
    <text evidence="9 10">LD(50) is 4 ug/kg by intracerebroventricular injection into mice.</text>
</comment>
<comment type="miscellaneous">
    <text evidence="2 5 6">Negative results: shows very weak or no activity on KCa1.1/KCNMA1, KCa2.1/KCNN1, KCa2.2/KCNN2, KCa2.3/KCNN3, Kir2.3/KCNJ4.</text>
</comment>
<comment type="similarity">
    <text evidence="14">Belongs to the short scorpion toxin superfamily. Potassium channel inhibitor family. Alpha-KTx 06 subfamily.</text>
</comment>
<comment type="caution">
    <text evidence="15 16 17 18 19">Has not the same disulfide pairing as other members of alpha-KTx 6.</text>
</comment>
<evidence type="ECO:0000250" key="1"/>
<evidence type="ECO:0000269" key="2">
    <source>
    </source>
</evidence>
<evidence type="ECO:0000269" key="3">
    <source>
    </source>
</evidence>
<evidence type="ECO:0000269" key="4">
    <source>
    </source>
</evidence>
<evidence type="ECO:0000269" key="5">
    <source>
    </source>
</evidence>
<evidence type="ECO:0000269" key="6">
    <source>
    </source>
</evidence>
<evidence type="ECO:0000269" key="7">
    <source>
    </source>
</evidence>
<evidence type="ECO:0000269" key="8">
    <source>
    </source>
</evidence>
<evidence type="ECO:0000269" key="9">
    <source>
    </source>
</evidence>
<evidence type="ECO:0000269" key="10">
    <source>
    </source>
</evidence>
<evidence type="ECO:0000269" key="11">
    <source>
    </source>
</evidence>
<evidence type="ECO:0000269" key="12">
    <source>
    </source>
</evidence>
<evidence type="ECO:0000303" key="13">
    <source>
    </source>
</evidence>
<evidence type="ECO:0000305" key="14"/>
<evidence type="ECO:0000305" key="15">
    <source>
    </source>
</evidence>
<evidence type="ECO:0000305" key="16">
    <source>
    </source>
</evidence>
<evidence type="ECO:0000305" key="17">
    <source>
    </source>
</evidence>
<evidence type="ECO:0000305" key="18">
    <source>
    </source>
</evidence>
<evidence type="ECO:0000305" key="19">
    <source>
    </source>
</evidence>
<evidence type="ECO:0000312" key="20">
    <source>
        <dbReference type="PDB" id="1TXM"/>
    </source>
</evidence>
<evidence type="ECO:0007829" key="21">
    <source>
        <dbReference type="PDB" id="1TXM"/>
    </source>
</evidence>
<evidence type="ECO:0007829" key="22">
    <source>
        <dbReference type="PDB" id="1WT7"/>
    </source>
</evidence>
<feature type="peptide" id="PRO_0000044929" description="Potassium channel toxin alpha-KTx 6.2">
    <location>
        <begin position="1"/>
        <end position="34"/>
    </location>
</feature>
<feature type="site" description="Basic residue of the functional dyad, critical for activity" evidence="2">
    <location>
        <position position="23"/>
    </location>
</feature>
<feature type="site" description="Aromatic residue of the functional dyad" evidence="1">
    <location>
        <position position="32"/>
    </location>
</feature>
<feature type="modified residue" description="Cysteine amide" evidence="12">
    <location>
        <position position="34"/>
    </location>
</feature>
<feature type="disulfide bond" evidence="4 9 10 11 12 20">
    <location>
        <begin position="3"/>
        <end position="24"/>
    </location>
</feature>
<feature type="disulfide bond" evidence="4 9 10 11 12 20">
    <location>
        <begin position="9"/>
        <end position="29"/>
    </location>
</feature>
<feature type="disulfide bond" evidence="4 9 10 11 12 20">
    <location>
        <begin position="13"/>
        <end position="19"/>
    </location>
</feature>
<feature type="disulfide bond" evidence="4 9 10 11 12 20">
    <location>
        <begin position="31"/>
        <end position="34"/>
    </location>
</feature>
<feature type="mutagenesis site" description="Induces a change in the third and fourth disulfide bonds, leading to disulfide bonds between C-13 and C-31, and C-19 and C-34." evidence="4">
    <original>K</original>
    <variation>Q</variation>
    <location>
        <position position="15"/>
    </location>
</feature>
<feature type="mutagenesis site" description="1000-fold decrease in affinity for shaker B." evidence="2">
    <original>K</original>
    <variation>A</variation>
    <location>
        <position position="23"/>
    </location>
</feature>
<feature type="mutagenesis site" description="Induces a change in the third and fourth disulfide bonds, leading to disulfide bonds between C-13 and C-31, and C-19 and C-34." evidence="4">
    <original>G</original>
    <variation>A</variation>
    <location>
        <position position="33"/>
    </location>
</feature>
<feature type="helix" evidence="21">
    <location>
        <begin position="6"/>
        <end position="16"/>
    </location>
</feature>
<feature type="strand" evidence="22">
    <location>
        <begin position="22"/>
        <end position="25"/>
    </location>
</feature>
<feature type="strand" evidence="22">
    <location>
        <begin position="28"/>
        <end position="31"/>
    </location>
</feature>
<sequence length="34" mass="3621">VSCTGSKDCYAPCRKQTGCPNAKCINKSCKCYGC</sequence>